<proteinExistence type="inferred from homology"/>
<evidence type="ECO:0000255" key="1">
    <source>
        <dbReference type="HAMAP-Rule" id="MF_01316"/>
    </source>
</evidence>
<keyword id="KW-0472">Membrane</keyword>
<keyword id="KW-0602">Photosynthesis</keyword>
<keyword id="KW-0604">Photosystem II</keyword>
<keyword id="KW-0674">Reaction center</keyword>
<keyword id="KW-0793">Thylakoid</keyword>
<keyword id="KW-0812">Transmembrane</keyword>
<keyword id="KW-1133">Transmembrane helix</keyword>
<organism>
    <name type="scientific">Synechococcus sp. (strain ATCC 27144 / PCC 6301 / SAUG 1402/1)</name>
    <name type="common">Anacystis nidulans</name>
    <dbReference type="NCBI Taxonomy" id="269084"/>
    <lineage>
        <taxon>Bacteria</taxon>
        <taxon>Bacillati</taxon>
        <taxon>Cyanobacteriota</taxon>
        <taxon>Cyanophyceae</taxon>
        <taxon>Synechococcales</taxon>
        <taxon>Synechococcaceae</taxon>
        <taxon>Synechococcus</taxon>
    </lineage>
</organism>
<protein>
    <recommendedName>
        <fullName evidence="1">Photosystem II reaction center protein I</fullName>
        <shortName evidence="1">PSII-I</shortName>
    </recommendedName>
    <alternativeName>
        <fullName evidence="1">PSII 4.4 kDa protein</fullName>
    </alternativeName>
</protein>
<sequence>MLALKVTVYVVVLFFVALFVFGFLSSDPARTPSRKDLED</sequence>
<name>PSBI_SYNP6</name>
<reference key="1">
    <citation type="journal article" date="1990" name="Nucleic Acids Res.">
        <title>Nucleotide sequence of the psbI gene of the cyanobacterium, Anacystis nidulans 6301.</title>
        <authorList>
            <person name="Chen J.C."/>
            <person name="Meng B.Y."/>
            <person name="Fukuta M."/>
            <person name="Sugiura M."/>
        </authorList>
    </citation>
    <scope>NUCLEOTIDE SEQUENCE [GENOMIC DNA]</scope>
</reference>
<reference key="2">
    <citation type="journal article" date="2007" name="Photosyn. Res.">
        <title>Complete nucleotide sequence of the freshwater unicellular cyanobacterium Synechococcus elongatus PCC 6301 chromosome: gene content and organization.</title>
        <authorList>
            <person name="Sugita C."/>
            <person name="Ogata K."/>
            <person name="Shikata M."/>
            <person name="Jikuya H."/>
            <person name="Takano J."/>
            <person name="Furumichi M."/>
            <person name="Kanehisa M."/>
            <person name="Omata T."/>
            <person name="Sugiura M."/>
            <person name="Sugita M."/>
        </authorList>
    </citation>
    <scope>NUCLEOTIDE SEQUENCE [LARGE SCALE GENOMIC DNA]</scope>
    <source>
        <strain>ATCC 27144 / PCC 6301 / SAUG 1402/1</strain>
    </source>
</reference>
<accession>P17747</accession>
<gene>
    <name evidence="1" type="primary">psbI</name>
    <name type="ordered locus">syc2386_c</name>
</gene>
<dbReference type="EMBL" id="X52750">
    <property type="protein sequence ID" value="CAA36961.1"/>
    <property type="molecule type" value="Genomic_DNA"/>
</dbReference>
<dbReference type="EMBL" id="AP008231">
    <property type="protein sequence ID" value="BAD80576.1"/>
    <property type="molecule type" value="Genomic_DNA"/>
</dbReference>
<dbReference type="RefSeq" id="WP_011244696.1">
    <property type="nucleotide sequence ID" value="NZ_CP085785.1"/>
</dbReference>
<dbReference type="SMR" id="P17747"/>
<dbReference type="KEGG" id="syc:syc2386_c"/>
<dbReference type="eggNOG" id="ENOG5033CII">
    <property type="taxonomic scope" value="Bacteria"/>
</dbReference>
<dbReference type="Proteomes" id="UP000001175">
    <property type="component" value="Chromosome"/>
</dbReference>
<dbReference type="GO" id="GO:0009539">
    <property type="term" value="C:photosystem II reaction center"/>
    <property type="evidence" value="ECO:0007669"/>
    <property type="project" value="InterPro"/>
</dbReference>
<dbReference type="GO" id="GO:0031676">
    <property type="term" value="C:plasma membrane-derived thylakoid membrane"/>
    <property type="evidence" value="ECO:0007669"/>
    <property type="project" value="UniProtKB-SubCell"/>
</dbReference>
<dbReference type="GO" id="GO:0015979">
    <property type="term" value="P:photosynthesis"/>
    <property type="evidence" value="ECO:0007669"/>
    <property type="project" value="UniProtKB-UniRule"/>
</dbReference>
<dbReference type="HAMAP" id="MF_01316">
    <property type="entry name" value="PSII_PsbI"/>
    <property type="match status" value="1"/>
</dbReference>
<dbReference type="InterPro" id="IPR003686">
    <property type="entry name" value="PSII_PsbI"/>
</dbReference>
<dbReference type="InterPro" id="IPR037271">
    <property type="entry name" value="PSII_PsbI_sf"/>
</dbReference>
<dbReference type="NCBIfam" id="NF002735">
    <property type="entry name" value="PRK02655.1"/>
    <property type="match status" value="1"/>
</dbReference>
<dbReference type="PANTHER" id="PTHR35772">
    <property type="entry name" value="PHOTOSYSTEM II REACTION CENTER PROTEIN I"/>
    <property type="match status" value="1"/>
</dbReference>
<dbReference type="PANTHER" id="PTHR35772:SF1">
    <property type="entry name" value="PHOTOSYSTEM II REACTION CENTER PROTEIN I"/>
    <property type="match status" value="1"/>
</dbReference>
<dbReference type="Pfam" id="PF02532">
    <property type="entry name" value="PsbI"/>
    <property type="match status" value="1"/>
</dbReference>
<dbReference type="SUPFAM" id="SSF161041">
    <property type="entry name" value="Photosystem II reaction center protein I, PsbI"/>
    <property type="match status" value="1"/>
</dbReference>
<comment type="function">
    <text evidence="1">One of the components of the core complex of photosystem II (PSII), required for its stability and/or assembly. PSII is a light-driven water:plastoquinone oxidoreductase that uses light energy to abstract electrons from H(2)O, generating O(2) and a proton gradient subsequently used for ATP formation. It consists of a core antenna complex that captures photons, and an electron transfer chain that converts photonic excitation into a charge separation.</text>
</comment>
<comment type="subunit">
    <text evidence="1">PSII is composed of 1 copy each of membrane proteins PsbA, PsbB, PsbC, PsbD, PsbE, PsbF, PsbH, PsbI, PsbJ, PsbK, PsbL, PsbM, PsbT, PsbX, PsbY, PsbZ, Psb30/Ycf12, peripheral proteins PsbO, CyanoQ (PsbQ), PsbU, PsbV and a large number of cofactors. It forms dimeric complexes.</text>
</comment>
<comment type="subcellular location">
    <subcellularLocation>
        <location evidence="1">Cellular thylakoid membrane</location>
        <topology evidence="1">Single-pass membrane protein</topology>
    </subcellularLocation>
</comment>
<comment type="similarity">
    <text evidence="1">Belongs to the PsbI family.</text>
</comment>
<feature type="chain" id="PRO_0000219661" description="Photosystem II reaction center protein I">
    <location>
        <begin position="1"/>
        <end position="39"/>
    </location>
</feature>
<feature type="transmembrane region" description="Helical" evidence="1">
    <location>
        <begin position="6"/>
        <end position="26"/>
    </location>
</feature>